<accession>B8ZL13</accession>
<protein>
    <recommendedName>
        <fullName evidence="1">Pyridoxal 5'-phosphate synthase subunit PdxT</fullName>
        <ecNumber evidence="1">4.3.3.6</ecNumber>
    </recommendedName>
    <alternativeName>
        <fullName evidence="1">Pdx2</fullName>
    </alternativeName>
    <alternativeName>
        <fullName evidence="1">Pyridoxal 5'-phosphate synthase glutaminase subunit</fullName>
        <ecNumber evidence="1">3.5.1.2</ecNumber>
    </alternativeName>
</protein>
<sequence>MKIGILALQGAFAEHAKVLDQLGVESVELRNLDDFQQDQSDLSGLILPGGESTTMGKLLRDQNMLLPIREAILSGLPVFGTCAGLILLAKEITSQKESHLGTMDMVVERNAYGRQLGSFYTEAECKGVGKIPMTFIRGPIISSVGEGVEILATVNNQIVAAQEKNMLVSSFHPELTDDVRLHQYFINMCKEKS</sequence>
<reference key="1">
    <citation type="journal article" date="2009" name="J. Bacteriol.">
        <title>Role of conjugative elements in the evolution of the multidrug-resistant pandemic clone Streptococcus pneumoniae Spain23F ST81.</title>
        <authorList>
            <person name="Croucher N.J."/>
            <person name="Walker D."/>
            <person name="Romero P."/>
            <person name="Lennard N."/>
            <person name="Paterson G.K."/>
            <person name="Bason N.C."/>
            <person name="Mitchell A.M."/>
            <person name="Quail M.A."/>
            <person name="Andrew P.W."/>
            <person name="Parkhill J."/>
            <person name="Bentley S.D."/>
            <person name="Mitchell T.J."/>
        </authorList>
    </citation>
    <scope>NUCLEOTIDE SEQUENCE [LARGE SCALE GENOMIC DNA]</scope>
    <source>
        <strain>ATCC 700669 / Spain 23F-1</strain>
    </source>
</reference>
<evidence type="ECO:0000255" key="1">
    <source>
        <dbReference type="HAMAP-Rule" id="MF_01615"/>
    </source>
</evidence>
<feature type="chain" id="PRO_1000185904" description="Pyridoxal 5'-phosphate synthase subunit PdxT">
    <location>
        <begin position="1"/>
        <end position="193"/>
    </location>
</feature>
<feature type="active site" description="Nucleophile" evidence="1">
    <location>
        <position position="82"/>
    </location>
</feature>
<feature type="active site" description="Charge relay system" evidence="1">
    <location>
        <position position="172"/>
    </location>
</feature>
<feature type="active site" description="Charge relay system" evidence="1">
    <location>
        <position position="174"/>
    </location>
</feature>
<feature type="binding site" evidence="1">
    <location>
        <begin position="50"/>
        <end position="52"/>
    </location>
    <ligand>
        <name>L-glutamine</name>
        <dbReference type="ChEBI" id="CHEBI:58359"/>
    </ligand>
</feature>
<feature type="binding site" evidence="1">
    <location>
        <position position="109"/>
    </location>
    <ligand>
        <name>L-glutamine</name>
        <dbReference type="ChEBI" id="CHEBI:58359"/>
    </ligand>
</feature>
<feature type="binding site" evidence="1">
    <location>
        <begin position="136"/>
        <end position="137"/>
    </location>
    <ligand>
        <name>L-glutamine</name>
        <dbReference type="ChEBI" id="CHEBI:58359"/>
    </ligand>
</feature>
<organism>
    <name type="scientific">Streptococcus pneumoniae (strain ATCC 700669 / Spain 23F-1)</name>
    <dbReference type="NCBI Taxonomy" id="561276"/>
    <lineage>
        <taxon>Bacteria</taxon>
        <taxon>Bacillati</taxon>
        <taxon>Bacillota</taxon>
        <taxon>Bacilli</taxon>
        <taxon>Lactobacillales</taxon>
        <taxon>Streptococcaceae</taxon>
        <taxon>Streptococcus</taxon>
    </lineage>
</organism>
<name>PDXT_STRPJ</name>
<proteinExistence type="inferred from homology"/>
<dbReference type="EC" id="4.3.3.6" evidence="1"/>
<dbReference type="EC" id="3.5.1.2" evidence="1"/>
<dbReference type="EMBL" id="FM211187">
    <property type="protein sequence ID" value="CAR69222.1"/>
    <property type="molecule type" value="Genomic_DNA"/>
</dbReference>
<dbReference type="RefSeq" id="WP_000689945.1">
    <property type="nucleotide sequence ID" value="NC_011900.1"/>
</dbReference>
<dbReference type="SMR" id="B8ZL13"/>
<dbReference type="MEROPS" id="C26.A32"/>
<dbReference type="GeneID" id="45653283"/>
<dbReference type="KEGG" id="sne:SPN23F14310"/>
<dbReference type="HOGENOM" id="CLU_069674_2_0_9"/>
<dbReference type="UniPathway" id="UPA00245"/>
<dbReference type="GO" id="GO:0005829">
    <property type="term" value="C:cytosol"/>
    <property type="evidence" value="ECO:0007669"/>
    <property type="project" value="TreeGrafter"/>
</dbReference>
<dbReference type="GO" id="GO:1903600">
    <property type="term" value="C:glutaminase complex"/>
    <property type="evidence" value="ECO:0007669"/>
    <property type="project" value="TreeGrafter"/>
</dbReference>
<dbReference type="GO" id="GO:0004359">
    <property type="term" value="F:glutaminase activity"/>
    <property type="evidence" value="ECO:0007669"/>
    <property type="project" value="UniProtKB-UniRule"/>
</dbReference>
<dbReference type="GO" id="GO:0036381">
    <property type="term" value="F:pyridoxal 5'-phosphate synthase (glutamine hydrolysing) activity"/>
    <property type="evidence" value="ECO:0007669"/>
    <property type="project" value="UniProtKB-UniRule"/>
</dbReference>
<dbReference type="GO" id="GO:0006543">
    <property type="term" value="P:glutamine catabolic process"/>
    <property type="evidence" value="ECO:0007669"/>
    <property type="project" value="UniProtKB-UniRule"/>
</dbReference>
<dbReference type="GO" id="GO:0042823">
    <property type="term" value="P:pyridoxal phosphate biosynthetic process"/>
    <property type="evidence" value="ECO:0007669"/>
    <property type="project" value="UniProtKB-UniRule"/>
</dbReference>
<dbReference type="GO" id="GO:0008614">
    <property type="term" value="P:pyridoxine metabolic process"/>
    <property type="evidence" value="ECO:0007669"/>
    <property type="project" value="TreeGrafter"/>
</dbReference>
<dbReference type="CDD" id="cd01749">
    <property type="entry name" value="GATase1_PB"/>
    <property type="match status" value="1"/>
</dbReference>
<dbReference type="FunFam" id="3.40.50.880:FF:000010">
    <property type="entry name" value="uncharacterized protein LOC100176842 isoform X2"/>
    <property type="match status" value="1"/>
</dbReference>
<dbReference type="Gene3D" id="3.40.50.880">
    <property type="match status" value="1"/>
</dbReference>
<dbReference type="HAMAP" id="MF_01615">
    <property type="entry name" value="PdxT"/>
    <property type="match status" value="1"/>
</dbReference>
<dbReference type="InterPro" id="IPR029062">
    <property type="entry name" value="Class_I_gatase-like"/>
</dbReference>
<dbReference type="InterPro" id="IPR002161">
    <property type="entry name" value="PdxT/SNO"/>
</dbReference>
<dbReference type="InterPro" id="IPR021196">
    <property type="entry name" value="PdxT/SNO_CS"/>
</dbReference>
<dbReference type="NCBIfam" id="TIGR03800">
    <property type="entry name" value="PLP_synth_Pdx2"/>
    <property type="match status" value="1"/>
</dbReference>
<dbReference type="PANTHER" id="PTHR31559">
    <property type="entry name" value="PYRIDOXAL 5'-PHOSPHATE SYNTHASE SUBUNIT SNO"/>
    <property type="match status" value="1"/>
</dbReference>
<dbReference type="PANTHER" id="PTHR31559:SF0">
    <property type="entry name" value="PYRIDOXAL 5'-PHOSPHATE SYNTHASE SUBUNIT SNO1-RELATED"/>
    <property type="match status" value="1"/>
</dbReference>
<dbReference type="Pfam" id="PF01174">
    <property type="entry name" value="SNO"/>
    <property type="match status" value="1"/>
</dbReference>
<dbReference type="PIRSF" id="PIRSF005639">
    <property type="entry name" value="Glut_amidoT_SNO"/>
    <property type="match status" value="1"/>
</dbReference>
<dbReference type="SUPFAM" id="SSF52317">
    <property type="entry name" value="Class I glutamine amidotransferase-like"/>
    <property type="match status" value="1"/>
</dbReference>
<dbReference type="PROSITE" id="PS01236">
    <property type="entry name" value="PDXT_SNO_1"/>
    <property type="match status" value="1"/>
</dbReference>
<dbReference type="PROSITE" id="PS51130">
    <property type="entry name" value="PDXT_SNO_2"/>
    <property type="match status" value="1"/>
</dbReference>
<comment type="function">
    <text evidence="1">Catalyzes the hydrolysis of glutamine to glutamate and ammonia as part of the biosynthesis of pyridoxal 5'-phosphate. The resulting ammonia molecule is channeled to the active site of PdxS.</text>
</comment>
<comment type="catalytic activity">
    <reaction evidence="1">
        <text>aldehydo-D-ribose 5-phosphate + D-glyceraldehyde 3-phosphate + L-glutamine = pyridoxal 5'-phosphate + L-glutamate + phosphate + 3 H2O + H(+)</text>
        <dbReference type="Rhea" id="RHEA:31507"/>
        <dbReference type="ChEBI" id="CHEBI:15377"/>
        <dbReference type="ChEBI" id="CHEBI:15378"/>
        <dbReference type="ChEBI" id="CHEBI:29985"/>
        <dbReference type="ChEBI" id="CHEBI:43474"/>
        <dbReference type="ChEBI" id="CHEBI:58273"/>
        <dbReference type="ChEBI" id="CHEBI:58359"/>
        <dbReference type="ChEBI" id="CHEBI:59776"/>
        <dbReference type="ChEBI" id="CHEBI:597326"/>
        <dbReference type="EC" id="4.3.3.6"/>
    </reaction>
</comment>
<comment type="catalytic activity">
    <reaction evidence="1">
        <text>L-glutamine + H2O = L-glutamate + NH4(+)</text>
        <dbReference type="Rhea" id="RHEA:15889"/>
        <dbReference type="ChEBI" id="CHEBI:15377"/>
        <dbReference type="ChEBI" id="CHEBI:28938"/>
        <dbReference type="ChEBI" id="CHEBI:29985"/>
        <dbReference type="ChEBI" id="CHEBI:58359"/>
        <dbReference type="EC" id="3.5.1.2"/>
    </reaction>
</comment>
<comment type="pathway">
    <text evidence="1">Cofactor biosynthesis; pyridoxal 5'-phosphate biosynthesis.</text>
</comment>
<comment type="subunit">
    <text evidence="1">In the presence of PdxS, forms a dodecamer of heterodimers. Only shows activity in the heterodimer.</text>
</comment>
<comment type="similarity">
    <text evidence="1">Belongs to the glutaminase PdxT/SNO family.</text>
</comment>
<gene>
    <name evidence="1" type="primary">pdxT</name>
    <name type="ordered locus">SPN23F14310</name>
</gene>
<keyword id="KW-0315">Glutamine amidotransferase</keyword>
<keyword id="KW-0378">Hydrolase</keyword>
<keyword id="KW-0456">Lyase</keyword>
<keyword id="KW-0663">Pyridoxal phosphate</keyword>